<dbReference type="EC" id="6.3.5.-" evidence="1"/>
<dbReference type="EMBL" id="CP000153">
    <property type="protein sequence ID" value="ABB44528.1"/>
    <property type="molecule type" value="Genomic_DNA"/>
</dbReference>
<dbReference type="RefSeq" id="WP_011372880.1">
    <property type="nucleotide sequence ID" value="NC_007575.1"/>
</dbReference>
<dbReference type="SMR" id="Q30R53"/>
<dbReference type="STRING" id="326298.Suden_1250"/>
<dbReference type="KEGG" id="tdn:Suden_1250"/>
<dbReference type="eggNOG" id="COG0721">
    <property type="taxonomic scope" value="Bacteria"/>
</dbReference>
<dbReference type="HOGENOM" id="CLU_105899_2_1_7"/>
<dbReference type="OrthoDB" id="9813938at2"/>
<dbReference type="Proteomes" id="UP000002714">
    <property type="component" value="Chromosome"/>
</dbReference>
<dbReference type="GO" id="GO:0050566">
    <property type="term" value="F:asparaginyl-tRNA synthase (glutamine-hydrolyzing) activity"/>
    <property type="evidence" value="ECO:0007669"/>
    <property type="project" value="RHEA"/>
</dbReference>
<dbReference type="GO" id="GO:0005524">
    <property type="term" value="F:ATP binding"/>
    <property type="evidence" value="ECO:0007669"/>
    <property type="project" value="UniProtKB-KW"/>
</dbReference>
<dbReference type="GO" id="GO:0050567">
    <property type="term" value="F:glutaminyl-tRNA synthase (glutamine-hydrolyzing) activity"/>
    <property type="evidence" value="ECO:0007669"/>
    <property type="project" value="UniProtKB-UniRule"/>
</dbReference>
<dbReference type="GO" id="GO:0070681">
    <property type="term" value="P:glutaminyl-tRNAGln biosynthesis via transamidation"/>
    <property type="evidence" value="ECO:0007669"/>
    <property type="project" value="TreeGrafter"/>
</dbReference>
<dbReference type="GO" id="GO:0006450">
    <property type="term" value="P:regulation of translational fidelity"/>
    <property type="evidence" value="ECO:0007669"/>
    <property type="project" value="InterPro"/>
</dbReference>
<dbReference type="GO" id="GO:0006412">
    <property type="term" value="P:translation"/>
    <property type="evidence" value="ECO:0007669"/>
    <property type="project" value="UniProtKB-UniRule"/>
</dbReference>
<dbReference type="Gene3D" id="1.10.20.60">
    <property type="entry name" value="Glu-tRNAGln amidotransferase C subunit, N-terminal domain"/>
    <property type="match status" value="1"/>
</dbReference>
<dbReference type="HAMAP" id="MF_00122">
    <property type="entry name" value="GatC"/>
    <property type="match status" value="1"/>
</dbReference>
<dbReference type="InterPro" id="IPR036113">
    <property type="entry name" value="Asp/Glu-ADT_sf_sub_c"/>
</dbReference>
<dbReference type="InterPro" id="IPR003837">
    <property type="entry name" value="GatC"/>
</dbReference>
<dbReference type="NCBIfam" id="TIGR00135">
    <property type="entry name" value="gatC"/>
    <property type="match status" value="1"/>
</dbReference>
<dbReference type="PANTHER" id="PTHR15004">
    <property type="entry name" value="GLUTAMYL-TRNA(GLN) AMIDOTRANSFERASE SUBUNIT C, MITOCHONDRIAL"/>
    <property type="match status" value="1"/>
</dbReference>
<dbReference type="PANTHER" id="PTHR15004:SF0">
    <property type="entry name" value="GLUTAMYL-TRNA(GLN) AMIDOTRANSFERASE SUBUNIT C, MITOCHONDRIAL"/>
    <property type="match status" value="1"/>
</dbReference>
<dbReference type="Pfam" id="PF02686">
    <property type="entry name" value="GatC"/>
    <property type="match status" value="1"/>
</dbReference>
<dbReference type="SUPFAM" id="SSF141000">
    <property type="entry name" value="Glu-tRNAGln amidotransferase C subunit"/>
    <property type="match status" value="1"/>
</dbReference>
<comment type="function">
    <text evidence="1">Allows the formation of correctly charged Asn-tRNA(Asn) or Gln-tRNA(Gln) through the transamidation of misacylated Asp-tRNA(Asn) or Glu-tRNA(Gln) in organisms which lack either or both of asparaginyl-tRNA or glutaminyl-tRNA synthetases. The reaction takes place in the presence of glutamine and ATP through an activated phospho-Asp-tRNA(Asn) or phospho-Glu-tRNA(Gln).</text>
</comment>
<comment type="catalytic activity">
    <reaction evidence="1">
        <text>L-glutamyl-tRNA(Gln) + L-glutamine + ATP + H2O = L-glutaminyl-tRNA(Gln) + L-glutamate + ADP + phosphate + H(+)</text>
        <dbReference type="Rhea" id="RHEA:17521"/>
        <dbReference type="Rhea" id="RHEA-COMP:9681"/>
        <dbReference type="Rhea" id="RHEA-COMP:9684"/>
        <dbReference type="ChEBI" id="CHEBI:15377"/>
        <dbReference type="ChEBI" id="CHEBI:15378"/>
        <dbReference type="ChEBI" id="CHEBI:29985"/>
        <dbReference type="ChEBI" id="CHEBI:30616"/>
        <dbReference type="ChEBI" id="CHEBI:43474"/>
        <dbReference type="ChEBI" id="CHEBI:58359"/>
        <dbReference type="ChEBI" id="CHEBI:78520"/>
        <dbReference type="ChEBI" id="CHEBI:78521"/>
        <dbReference type="ChEBI" id="CHEBI:456216"/>
    </reaction>
</comment>
<comment type="catalytic activity">
    <reaction evidence="1">
        <text>L-aspartyl-tRNA(Asn) + L-glutamine + ATP + H2O = L-asparaginyl-tRNA(Asn) + L-glutamate + ADP + phosphate + 2 H(+)</text>
        <dbReference type="Rhea" id="RHEA:14513"/>
        <dbReference type="Rhea" id="RHEA-COMP:9674"/>
        <dbReference type="Rhea" id="RHEA-COMP:9677"/>
        <dbReference type="ChEBI" id="CHEBI:15377"/>
        <dbReference type="ChEBI" id="CHEBI:15378"/>
        <dbReference type="ChEBI" id="CHEBI:29985"/>
        <dbReference type="ChEBI" id="CHEBI:30616"/>
        <dbReference type="ChEBI" id="CHEBI:43474"/>
        <dbReference type="ChEBI" id="CHEBI:58359"/>
        <dbReference type="ChEBI" id="CHEBI:78515"/>
        <dbReference type="ChEBI" id="CHEBI:78516"/>
        <dbReference type="ChEBI" id="CHEBI:456216"/>
    </reaction>
</comment>
<comment type="subunit">
    <text evidence="1">Heterotrimer of A, B and C subunits.</text>
</comment>
<comment type="similarity">
    <text evidence="1">Belongs to the GatC family.</text>
</comment>
<protein>
    <recommendedName>
        <fullName evidence="1">Aspartyl/glutamyl-tRNA(Asn/Gln) amidotransferase subunit C</fullName>
        <shortName evidence="1">Asp/Glu-ADT subunit C</shortName>
        <ecNumber evidence="1">6.3.5.-</ecNumber>
    </recommendedName>
</protein>
<organism>
    <name type="scientific">Sulfurimonas denitrificans (strain ATCC 33889 / DSM 1251)</name>
    <name type="common">Thiomicrospira denitrificans (strain ATCC 33889 / DSM 1251)</name>
    <dbReference type="NCBI Taxonomy" id="326298"/>
    <lineage>
        <taxon>Bacteria</taxon>
        <taxon>Pseudomonadati</taxon>
        <taxon>Campylobacterota</taxon>
        <taxon>Epsilonproteobacteria</taxon>
        <taxon>Campylobacterales</taxon>
        <taxon>Sulfurimonadaceae</taxon>
        <taxon>Sulfurimonas</taxon>
    </lineage>
</organism>
<sequence length="96" mass="10961">MQVDDVLLSRLEKLSFLKISEDKREEIVSQLSEIVNFVENLSLLDTQNVDEKFAMSNDSTFLREDTAFCDTSINESILKNAPLSSDNFFVVPKIIE</sequence>
<proteinExistence type="inferred from homology"/>
<evidence type="ECO:0000255" key="1">
    <source>
        <dbReference type="HAMAP-Rule" id="MF_00122"/>
    </source>
</evidence>
<name>GATC_SULDN</name>
<feature type="chain" id="PRO_1000016239" description="Aspartyl/glutamyl-tRNA(Asn/Gln) amidotransferase subunit C">
    <location>
        <begin position="1"/>
        <end position="96"/>
    </location>
</feature>
<gene>
    <name evidence="1" type="primary">gatC</name>
    <name type="ordered locus">Suden_1250</name>
</gene>
<accession>Q30R53</accession>
<keyword id="KW-0067">ATP-binding</keyword>
<keyword id="KW-0436">Ligase</keyword>
<keyword id="KW-0547">Nucleotide-binding</keyword>
<keyword id="KW-0648">Protein biosynthesis</keyword>
<keyword id="KW-1185">Reference proteome</keyword>
<reference key="1">
    <citation type="journal article" date="2008" name="Appl. Environ. Microbiol.">
        <title>Genome of the epsilonproteobacterial chemolithoautotroph Sulfurimonas denitrificans.</title>
        <authorList>
            <person name="Sievert S.M."/>
            <person name="Scott K.M."/>
            <person name="Klotz M.G."/>
            <person name="Chain P.S.G."/>
            <person name="Hauser L.J."/>
            <person name="Hemp J."/>
            <person name="Huegler M."/>
            <person name="Land M."/>
            <person name="Lapidus A."/>
            <person name="Larimer F.W."/>
            <person name="Lucas S."/>
            <person name="Malfatti S.A."/>
            <person name="Meyer F."/>
            <person name="Paulsen I.T."/>
            <person name="Ren Q."/>
            <person name="Simon J."/>
            <person name="Bailey K."/>
            <person name="Diaz E."/>
            <person name="Fitzpatrick K.A."/>
            <person name="Glover B."/>
            <person name="Gwatney N."/>
            <person name="Korajkic A."/>
            <person name="Long A."/>
            <person name="Mobberley J.M."/>
            <person name="Pantry S.N."/>
            <person name="Pazder G."/>
            <person name="Peterson S."/>
            <person name="Quintanilla J.D."/>
            <person name="Sprinkle R."/>
            <person name="Stephens J."/>
            <person name="Thomas P."/>
            <person name="Vaughn R."/>
            <person name="Weber M.J."/>
            <person name="Wooten L.L."/>
        </authorList>
    </citation>
    <scope>NUCLEOTIDE SEQUENCE [LARGE SCALE GENOMIC DNA]</scope>
    <source>
        <strain>ATCC 33889 / DSM 1251</strain>
    </source>
</reference>